<evidence type="ECO:0000255" key="1">
    <source>
        <dbReference type="HAMAP-Rule" id="MF_00616"/>
    </source>
</evidence>
<reference key="1">
    <citation type="journal article" date="2006" name="Genome Biol.">
        <title>Genomic analysis reveals that Pseudomonas aeruginosa virulence is combinatorial.</title>
        <authorList>
            <person name="Lee D.G."/>
            <person name="Urbach J.M."/>
            <person name="Wu G."/>
            <person name="Liberati N.T."/>
            <person name="Feinbaum R.L."/>
            <person name="Miyata S."/>
            <person name="Diggins L.T."/>
            <person name="He J."/>
            <person name="Saucier M."/>
            <person name="Deziel E."/>
            <person name="Friedman L."/>
            <person name="Li L."/>
            <person name="Grills G."/>
            <person name="Montgomery K."/>
            <person name="Kucherlapati R."/>
            <person name="Rahme L.G."/>
            <person name="Ausubel F.M."/>
        </authorList>
    </citation>
    <scope>NUCLEOTIDE SEQUENCE [LARGE SCALE GENOMIC DNA]</scope>
    <source>
        <strain>UCBPP-PA14</strain>
    </source>
</reference>
<name>ALLA_PSEAB</name>
<sequence>MRTLKIEPLTKEAFAPFGDVIETAGSDYFMINNGSTRRYHKLATVETAQPEDNAIISIFSAEKLEMPLRIRMLERHPLGSQAFIPLLGNPFLVVVAPLGDVPVPGLVRAFLTNGRQGVNYHRGVWHHPVLTIEKRDDFLVVDRSGSGNNCDEHFFTEDEQLLLDPQSNQ</sequence>
<gene>
    <name evidence="1" type="primary">allA</name>
    <name type="ordered locus">PA14_44860</name>
</gene>
<accession>Q02JZ7</accession>
<comment type="function">
    <text evidence="1">Catalyzes the catabolism of the allantoin degradation intermediate (S)-ureidoglycolate, generating urea and glyoxylate. Involved in the utilization of allantoin as nitrogen source.</text>
</comment>
<comment type="catalytic activity">
    <reaction evidence="1">
        <text>(S)-ureidoglycolate = urea + glyoxylate</text>
        <dbReference type="Rhea" id="RHEA:11304"/>
        <dbReference type="ChEBI" id="CHEBI:16199"/>
        <dbReference type="ChEBI" id="CHEBI:36655"/>
        <dbReference type="ChEBI" id="CHEBI:57296"/>
        <dbReference type="EC" id="4.3.2.3"/>
    </reaction>
</comment>
<comment type="cofactor">
    <cofactor evidence="1">
        <name>Ni(2+)</name>
        <dbReference type="ChEBI" id="CHEBI:49786"/>
    </cofactor>
</comment>
<comment type="pathway">
    <text evidence="1">Nitrogen metabolism; (S)-allantoin degradation.</text>
</comment>
<comment type="subunit">
    <text evidence="1">Homodimer.</text>
</comment>
<comment type="similarity">
    <text evidence="1">Belongs to the ureidoglycolate lyase family.</text>
</comment>
<feature type="chain" id="PRO_1000061360" description="Ureidoglycolate lyase">
    <location>
        <begin position="1"/>
        <end position="169"/>
    </location>
</feature>
<organism>
    <name type="scientific">Pseudomonas aeruginosa (strain UCBPP-PA14)</name>
    <dbReference type="NCBI Taxonomy" id="208963"/>
    <lineage>
        <taxon>Bacteria</taxon>
        <taxon>Pseudomonadati</taxon>
        <taxon>Pseudomonadota</taxon>
        <taxon>Gammaproteobacteria</taxon>
        <taxon>Pseudomonadales</taxon>
        <taxon>Pseudomonadaceae</taxon>
        <taxon>Pseudomonas</taxon>
    </lineage>
</organism>
<dbReference type="EC" id="4.3.2.3" evidence="1"/>
<dbReference type="EMBL" id="CP000438">
    <property type="protein sequence ID" value="ABJ10694.1"/>
    <property type="molecule type" value="Genomic_DNA"/>
</dbReference>
<dbReference type="RefSeq" id="WP_003083329.1">
    <property type="nucleotide sequence ID" value="NZ_CP034244.1"/>
</dbReference>
<dbReference type="SMR" id="Q02JZ7"/>
<dbReference type="KEGG" id="pau:PA14_44860"/>
<dbReference type="PseudoCAP" id="PA14_44860"/>
<dbReference type="HOGENOM" id="CLU_070848_1_0_6"/>
<dbReference type="BioCyc" id="PAER208963:G1G74-3769-MONOMER"/>
<dbReference type="UniPathway" id="UPA00395"/>
<dbReference type="Proteomes" id="UP000000653">
    <property type="component" value="Chromosome"/>
</dbReference>
<dbReference type="GO" id="GO:0004848">
    <property type="term" value="F:ureidoglycolate hydrolase activity"/>
    <property type="evidence" value="ECO:0007669"/>
    <property type="project" value="InterPro"/>
</dbReference>
<dbReference type="GO" id="GO:0050385">
    <property type="term" value="F:ureidoglycolate lyase activity"/>
    <property type="evidence" value="ECO:0007669"/>
    <property type="project" value="UniProtKB-UniRule"/>
</dbReference>
<dbReference type="GO" id="GO:0000256">
    <property type="term" value="P:allantoin catabolic process"/>
    <property type="evidence" value="ECO:0007669"/>
    <property type="project" value="UniProtKB-UniRule"/>
</dbReference>
<dbReference type="GO" id="GO:0006145">
    <property type="term" value="P:purine nucleobase catabolic process"/>
    <property type="evidence" value="ECO:0007669"/>
    <property type="project" value="UniProtKB-UniRule"/>
</dbReference>
<dbReference type="CDD" id="cd20298">
    <property type="entry name" value="cupin_UAH"/>
    <property type="match status" value="1"/>
</dbReference>
<dbReference type="FunFam" id="2.60.120.480:FF:000001">
    <property type="entry name" value="Ureidoglycolate lyase"/>
    <property type="match status" value="1"/>
</dbReference>
<dbReference type="Gene3D" id="2.60.120.480">
    <property type="entry name" value="Ureidoglycolate hydrolase"/>
    <property type="match status" value="1"/>
</dbReference>
<dbReference type="HAMAP" id="MF_00616">
    <property type="entry name" value="Ureidogly_lyase"/>
    <property type="match status" value="1"/>
</dbReference>
<dbReference type="InterPro" id="IPR011051">
    <property type="entry name" value="RmlC_Cupin_sf"/>
</dbReference>
<dbReference type="InterPro" id="IPR047233">
    <property type="entry name" value="UAH_cupin"/>
</dbReference>
<dbReference type="InterPro" id="IPR007247">
    <property type="entry name" value="Ureidogly_lyase"/>
</dbReference>
<dbReference type="InterPro" id="IPR023525">
    <property type="entry name" value="Ureidogly_lyase_bac"/>
</dbReference>
<dbReference type="InterPro" id="IPR024060">
    <property type="entry name" value="Ureidoglycolate_lyase_dom_sf"/>
</dbReference>
<dbReference type="NCBIfam" id="NF002949">
    <property type="entry name" value="PRK03606.1-2"/>
    <property type="match status" value="1"/>
</dbReference>
<dbReference type="NCBIfam" id="NF009932">
    <property type="entry name" value="PRK13395.1"/>
    <property type="match status" value="1"/>
</dbReference>
<dbReference type="PANTHER" id="PTHR21221">
    <property type="entry name" value="UREIDOGLYCOLATE HYDROLASE"/>
    <property type="match status" value="1"/>
</dbReference>
<dbReference type="PANTHER" id="PTHR21221:SF1">
    <property type="entry name" value="UREIDOGLYCOLATE LYASE"/>
    <property type="match status" value="1"/>
</dbReference>
<dbReference type="Pfam" id="PF04115">
    <property type="entry name" value="Ureidogly_lyase"/>
    <property type="match status" value="1"/>
</dbReference>
<dbReference type="PIRSF" id="PIRSF017306">
    <property type="entry name" value="Ureidogly_hydro"/>
    <property type="match status" value="1"/>
</dbReference>
<dbReference type="SUPFAM" id="SSF51182">
    <property type="entry name" value="RmlC-like cupins"/>
    <property type="match status" value="1"/>
</dbReference>
<keyword id="KW-0456">Lyase</keyword>
<keyword id="KW-0659">Purine metabolism</keyword>
<proteinExistence type="inferred from homology"/>
<protein>
    <recommendedName>
        <fullName evidence="1">Ureidoglycolate lyase</fullName>
        <ecNumber evidence="1">4.3.2.3</ecNumber>
    </recommendedName>
    <alternativeName>
        <fullName evidence="1">Ureidoglycolatase</fullName>
    </alternativeName>
</protein>